<protein>
    <recommendedName>
        <fullName>Respiratory supercomplex factor 1, mitochondrial</fullName>
    </recommendedName>
</protein>
<evidence type="ECO:0000250" key="1"/>
<evidence type="ECO:0000255" key="2"/>
<evidence type="ECO:0000255" key="3">
    <source>
        <dbReference type="PROSITE-ProRule" id="PRU00836"/>
    </source>
</evidence>
<evidence type="ECO:0000305" key="4"/>
<proteinExistence type="inferred from homology"/>
<feature type="chain" id="PRO_0000399623" description="Respiratory supercomplex factor 1, mitochondrial">
    <location>
        <begin position="1"/>
        <end position="155"/>
    </location>
</feature>
<feature type="transmembrane region" description="Helical" evidence="3">
    <location>
        <begin position="32"/>
        <end position="49"/>
    </location>
</feature>
<feature type="transmembrane region" description="Helical" evidence="3">
    <location>
        <begin position="62"/>
        <end position="84"/>
    </location>
</feature>
<feature type="domain" description="HIG1" evidence="3">
    <location>
        <begin position="4"/>
        <end position="95"/>
    </location>
</feature>
<feature type="coiled-coil region" evidence="2">
    <location>
        <begin position="89"/>
        <end position="142"/>
    </location>
</feature>
<reference key="1">
    <citation type="journal article" date="2009" name="Nature">
        <title>Evolution of pathogenicity and sexual reproduction in eight Candida genomes.</title>
        <authorList>
            <person name="Butler G."/>
            <person name="Rasmussen M.D."/>
            <person name="Lin M.F."/>
            <person name="Santos M.A.S."/>
            <person name="Sakthikumar S."/>
            <person name="Munro C.A."/>
            <person name="Rheinbay E."/>
            <person name="Grabherr M."/>
            <person name="Forche A."/>
            <person name="Reedy J.L."/>
            <person name="Agrafioti I."/>
            <person name="Arnaud M.B."/>
            <person name="Bates S."/>
            <person name="Brown A.J.P."/>
            <person name="Brunke S."/>
            <person name="Costanzo M.C."/>
            <person name="Fitzpatrick D.A."/>
            <person name="de Groot P.W.J."/>
            <person name="Harris D."/>
            <person name="Hoyer L.L."/>
            <person name="Hube B."/>
            <person name="Klis F.M."/>
            <person name="Kodira C."/>
            <person name="Lennard N."/>
            <person name="Logue M.E."/>
            <person name="Martin R."/>
            <person name="Neiman A.M."/>
            <person name="Nikolaou E."/>
            <person name="Quail M.A."/>
            <person name="Quinn J."/>
            <person name="Santos M.C."/>
            <person name="Schmitzberger F.F."/>
            <person name="Sherlock G."/>
            <person name="Shah P."/>
            <person name="Silverstein K.A.T."/>
            <person name="Skrzypek M.S."/>
            <person name="Soll D."/>
            <person name="Staggs R."/>
            <person name="Stansfield I."/>
            <person name="Stumpf M.P.H."/>
            <person name="Sudbery P.E."/>
            <person name="Srikantha T."/>
            <person name="Zeng Q."/>
            <person name="Berman J."/>
            <person name="Berriman M."/>
            <person name="Heitman J."/>
            <person name="Gow N.A.R."/>
            <person name="Lorenz M.C."/>
            <person name="Birren B.W."/>
            <person name="Kellis M."/>
            <person name="Cuomo C.A."/>
        </authorList>
    </citation>
    <scope>NUCLEOTIDE SEQUENCE [LARGE SCALE GENOMIC DNA]</scope>
    <source>
        <strain>WO-1</strain>
    </source>
</reference>
<name>RCF1_CANAW</name>
<gene>
    <name type="primary">RCF1</name>
    <name type="synonym">AIM31</name>
    <name type="ORF">CAWG_04752</name>
</gene>
<comment type="function">
    <text evidence="1">Cytochrome c oxidase subunit which plays a role in assembly of respiratory supercomplexes.</text>
</comment>
<comment type="subunit">
    <text evidence="1">Associates with the respiratory chain complex III/complex IV supercomplex.</text>
</comment>
<comment type="subcellular location">
    <subcellularLocation>
        <location evidence="3">Mitochondrion membrane</location>
        <topology evidence="3">Multi-pass membrane protein</topology>
    </subcellularLocation>
</comment>
<comment type="similarity">
    <text evidence="4">Belongs to the RCF1 family.</text>
</comment>
<organism>
    <name type="scientific">Candida albicans (strain WO-1)</name>
    <name type="common">Yeast</name>
    <dbReference type="NCBI Taxonomy" id="294748"/>
    <lineage>
        <taxon>Eukaryota</taxon>
        <taxon>Fungi</taxon>
        <taxon>Dikarya</taxon>
        <taxon>Ascomycota</taxon>
        <taxon>Saccharomycotina</taxon>
        <taxon>Pichiomycetes</taxon>
        <taxon>Debaryomycetaceae</taxon>
        <taxon>Candida/Lodderomyces clade</taxon>
        <taxon>Candida</taxon>
    </lineage>
</organism>
<keyword id="KW-0175">Coiled coil</keyword>
<keyword id="KW-0472">Membrane</keyword>
<keyword id="KW-0496">Mitochondrion</keyword>
<keyword id="KW-0812">Transmembrane</keyword>
<keyword id="KW-1133">Transmembrane helix</keyword>
<accession>C4YRP9</accession>
<dbReference type="EMBL" id="CM000311">
    <property type="protein sequence ID" value="EEQ46402.1"/>
    <property type="molecule type" value="Genomic_DNA"/>
</dbReference>
<dbReference type="SMR" id="C4YRP9"/>
<dbReference type="PaxDb" id="5476-C4YRP9"/>
<dbReference type="VEuPathDB" id="FungiDB:CAWG_04752"/>
<dbReference type="HOGENOM" id="CLU_087356_1_0_1"/>
<dbReference type="OMA" id="YYRTERT"/>
<dbReference type="OrthoDB" id="22988at766764"/>
<dbReference type="Proteomes" id="UP000001429">
    <property type="component" value="Chromosome 5"/>
</dbReference>
<dbReference type="GO" id="GO:0031966">
    <property type="term" value="C:mitochondrial membrane"/>
    <property type="evidence" value="ECO:0007669"/>
    <property type="project" value="UniProtKB-SubCell"/>
</dbReference>
<dbReference type="GO" id="GO:0097250">
    <property type="term" value="P:mitochondrial respirasome assembly"/>
    <property type="evidence" value="ECO:0007669"/>
    <property type="project" value="TreeGrafter"/>
</dbReference>
<dbReference type="Gene3D" id="6.10.140.1320">
    <property type="match status" value="1"/>
</dbReference>
<dbReference type="InterPro" id="IPR007667">
    <property type="entry name" value="Hypoxia_induced_domain"/>
</dbReference>
<dbReference type="InterPro" id="IPR050355">
    <property type="entry name" value="RCF1"/>
</dbReference>
<dbReference type="PANTHER" id="PTHR12297:SF3">
    <property type="entry name" value="HIG1 DOMAIN FAMILY MEMBER 1A"/>
    <property type="match status" value="1"/>
</dbReference>
<dbReference type="PANTHER" id="PTHR12297">
    <property type="entry name" value="HYPOXIA-INDUCBILE GENE 1 HIG1 -RELATED"/>
    <property type="match status" value="1"/>
</dbReference>
<dbReference type="Pfam" id="PF04588">
    <property type="entry name" value="HIG_1_N"/>
    <property type="match status" value="1"/>
</dbReference>
<dbReference type="PROSITE" id="PS51503">
    <property type="entry name" value="HIG1"/>
    <property type="match status" value="1"/>
</dbReference>
<sequence>MSVRLPSSMSYGEEEEPDVLQKMWDKSKQQPFVPLGSLLTAGAVLLAARSMKRGEKLKTQRYFRYRIGFQLATLVALVGGGFYYGTETSQHKQTREDKLREKAKQREKLWIEELERRDAIIQARKQRLEESKKELRELAKQGFIEEKESNDKKED</sequence>